<organism>
    <name type="scientific">Neisseria meningitidis serogroup A / serotype 4A (strain DSM 15465 / Z2491)</name>
    <dbReference type="NCBI Taxonomy" id="122587"/>
    <lineage>
        <taxon>Bacteria</taxon>
        <taxon>Pseudomonadati</taxon>
        <taxon>Pseudomonadota</taxon>
        <taxon>Betaproteobacteria</taxon>
        <taxon>Neisseriales</taxon>
        <taxon>Neisseriaceae</taxon>
        <taxon>Neisseria</taxon>
    </lineage>
</organism>
<reference key="1">
    <citation type="journal article" date="2000" name="Nature">
        <title>Complete DNA sequence of a serogroup A strain of Neisseria meningitidis Z2491.</title>
        <authorList>
            <person name="Parkhill J."/>
            <person name="Achtman M."/>
            <person name="James K.D."/>
            <person name="Bentley S.D."/>
            <person name="Churcher C.M."/>
            <person name="Klee S.R."/>
            <person name="Morelli G."/>
            <person name="Basham D."/>
            <person name="Brown D."/>
            <person name="Chillingworth T."/>
            <person name="Davies R.M."/>
            <person name="Davis P."/>
            <person name="Devlin K."/>
            <person name="Feltwell T."/>
            <person name="Hamlin N."/>
            <person name="Holroyd S."/>
            <person name="Jagels K."/>
            <person name="Leather S."/>
            <person name="Moule S."/>
            <person name="Mungall K.L."/>
            <person name="Quail M.A."/>
            <person name="Rajandream M.A."/>
            <person name="Rutherford K.M."/>
            <person name="Simmonds M."/>
            <person name="Skelton J."/>
            <person name="Whitehead S."/>
            <person name="Spratt B.G."/>
            <person name="Barrell B.G."/>
        </authorList>
    </citation>
    <scope>NUCLEOTIDE SEQUENCE [LARGE SCALE GENOMIC DNA]</scope>
    <source>
        <strain>DSM 15465 / Z2491</strain>
    </source>
</reference>
<comment type="similarity">
    <text evidence="1">Belongs to the bacterial ribosomal protein bL27 family.</text>
</comment>
<sequence length="90" mass="9685">MASKKAGGSTRNGRDSEAKRLGVKAYGNELIPAGSIIVRQRGTKFHAGDNVGMGKDHTLFAKVDGYVEFKTKGALNRKTVSIRPYTGSEE</sequence>
<accession>P66129</accession>
<accession>A1ITZ0</accession>
<accession>Q9JRI8</accession>
<protein>
    <recommendedName>
        <fullName evidence="1">Large ribosomal subunit protein bL27</fullName>
    </recommendedName>
    <alternativeName>
        <fullName evidence="3">50S ribosomal protein L27</fullName>
    </alternativeName>
</protein>
<keyword id="KW-0687">Ribonucleoprotein</keyword>
<keyword id="KW-0689">Ribosomal protein</keyword>
<proteinExistence type="inferred from homology"/>
<evidence type="ECO:0000255" key="1">
    <source>
        <dbReference type="HAMAP-Rule" id="MF_00539"/>
    </source>
</evidence>
<evidence type="ECO:0000256" key="2">
    <source>
        <dbReference type="SAM" id="MobiDB-lite"/>
    </source>
</evidence>
<evidence type="ECO:0000305" key="3"/>
<gene>
    <name evidence="1" type="primary">rpmA</name>
    <name type="ordered locus">NMA2163</name>
</gene>
<dbReference type="EMBL" id="AL157959">
    <property type="protein sequence ID" value="CAM09259.1"/>
    <property type="molecule type" value="Genomic_DNA"/>
</dbReference>
<dbReference type="RefSeq" id="WP_002212328.1">
    <property type="nucleotide sequence ID" value="NC_003116.1"/>
</dbReference>
<dbReference type="SMR" id="P66129"/>
<dbReference type="EnsemblBacteria" id="CAM09259">
    <property type="protein sequence ID" value="CAM09259"/>
    <property type="gene ID" value="NMA2163"/>
</dbReference>
<dbReference type="GeneID" id="93387415"/>
<dbReference type="KEGG" id="nma:NMA2163"/>
<dbReference type="HOGENOM" id="CLU_095424_4_1_4"/>
<dbReference type="Proteomes" id="UP000000626">
    <property type="component" value="Chromosome"/>
</dbReference>
<dbReference type="GO" id="GO:0022625">
    <property type="term" value="C:cytosolic large ribosomal subunit"/>
    <property type="evidence" value="ECO:0007669"/>
    <property type="project" value="TreeGrafter"/>
</dbReference>
<dbReference type="GO" id="GO:0003735">
    <property type="term" value="F:structural constituent of ribosome"/>
    <property type="evidence" value="ECO:0007669"/>
    <property type="project" value="InterPro"/>
</dbReference>
<dbReference type="GO" id="GO:0006412">
    <property type="term" value="P:translation"/>
    <property type="evidence" value="ECO:0007669"/>
    <property type="project" value="UniProtKB-UniRule"/>
</dbReference>
<dbReference type="FunFam" id="2.40.50.100:FF:000001">
    <property type="entry name" value="50S ribosomal protein L27"/>
    <property type="match status" value="1"/>
</dbReference>
<dbReference type="Gene3D" id="2.40.50.100">
    <property type="match status" value="1"/>
</dbReference>
<dbReference type="HAMAP" id="MF_00539">
    <property type="entry name" value="Ribosomal_bL27"/>
    <property type="match status" value="1"/>
</dbReference>
<dbReference type="InterPro" id="IPR001684">
    <property type="entry name" value="Ribosomal_bL27"/>
</dbReference>
<dbReference type="InterPro" id="IPR018261">
    <property type="entry name" value="Ribosomal_bL27_CS"/>
</dbReference>
<dbReference type="NCBIfam" id="TIGR00062">
    <property type="entry name" value="L27"/>
    <property type="match status" value="1"/>
</dbReference>
<dbReference type="PANTHER" id="PTHR15893:SF0">
    <property type="entry name" value="LARGE RIBOSOMAL SUBUNIT PROTEIN BL27M"/>
    <property type="match status" value="1"/>
</dbReference>
<dbReference type="PANTHER" id="PTHR15893">
    <property type="entry name" value="RIBOSOMAL PROTEIN L27"/>
    <property type="match status" value="1"/>
</dbReference>
<dbReference type="Pfam" id="PF01016">
    <property type="entry name" value="Ribosomal_L27"/>
    <property type="match status" value="1"/>
</dbReference>
<dbReference type="PRINTS" id="PR00063">
    <property type="entry name" value="RIBOSOMALL27"/>
</dbReference>
<dbReference type="SUPFAM" id="SSF110324">
    <property type="entry name" value="Ribosomal L27 protein-like"/>
    <property type="match status" value="1"/>
</dbReference>
<dbReference type="PROSITE" id="PS00831">
    <property type="entry name" value="RIBOSOMAL_L27"/>
    <property type="match status" value="1"/>
</dbReference>
<name>RL27_NEIMA</name>
<feature type="chain" id="PRO_0000181132" description="Large ribosomal subunit protein bL27">
    <location>
        <begin position="1"/>
        <end position="90"/>
    </location>
</feature>
<feature type="region of interest" description="Disordered" evidence="2">
    <location>
        <begin position="1"/>
        <end position="21"/>
    </location>
</feature>